<keyword id="KW-0028">Amino-acid biosynthesis</keyword>
<keyword id="KW-0057">Aromatic amino acid biosynthesis</keyword>
<keyword id="KW-0520">NAD</keyword>
<keyword id="KW-0521">NADP</keyword>
<keyword id="KW-0560">Oxidoreductase</keyword>
<dbReference type="EC" id="1.1.1.282" evidence="1"/>
<dbReference type="EMBL" id="CP000886">
    <property type="protein sequence ID" value="ABX67361.1"/>
    <property type="molecule type" value="Genomic_DNA"/>
</dbReference>
<dbReference type="RefSeq" id="WP_000383488.1">
    <property type="nucleotide sequence ID" value="NC_010102.1"/>
</dbReference>
<dbReference type="SMR" id="A9N158"/>
<dbReference type="KEGG" id="spq:SPAB_01974"/>
<dbReference type="PATRIC" id="fig|1016998.12.peg.1862"/>
<dbReference type="HOGENOM" id="CLU_044063_4_4_6"/>
<dbReference type="BioCyc" id="SENT1016998:SPAB_RS08050-MONOMER"/>
<dbReference type="UniPathway" id="UPA00053">
    <property type="reaction ID" value="UER00087"/>
</dbReference>
<dbReference type="Proteomes" id="UP000008556">
    <property type="component" value="Chromosome"/>
</dbReference>
<dbReference type="GO" id="GO:0030266">
    <property type="term" value="F:quinate 3-dehydrogenase (NAD+) activity"/>
    <property type="evidence" value="ECO:0007669"/>
    <property type="project" value="UniProtKB-UniRule"/>
</dbReference>
<dbReference type="GO" id="GO:0052733">
    <property type="term" value="F:quinate 3-dehydrogenase (NADP+) activity"/>
    <property type="evidence" value="ECO:0007669"/>
    <property type="project" value="InterPro"/>
</dbReference>
<dbReference type="GO" id="GO:0052734">
    <property type="term" value="F:shikimate 3-dehydrogenase (NAD+) activity"/>
    <property type="evidence" value="ECO:0007669"/>
    <property type="project" value="InterPro"/>
</dbReference>
<dbReference type="GO" id="GO:0004764">
    <property type="term" value="F:shikimate 3-dehydrogenase (NADP+) activity"/>
    <property type="evidence" value="ECO:0007669"/>
    <property type="project" value="UniProtKB-UniRule"/>
</dbReference>
<dbReference type="GO" id="GO:0008652">
    <property type="term" value="P:amino acid biosynthetic process"/>
    <property type="evidence" value="ECO:0007669"/>
    <property type="project" value="UniProtKB-KW"/>
</dbReference>
<dbReference type="GO" id="GO:0009073">
    <property type="term" value="P:aromatic amino acid family biosynthetic process"/>
    <property type="evidence" value="ECO:0007669"/>
    <property type="project" value="UniProtKB-KW"/>
</dbReference>
<dbReference type="GO" id="GO:0009423">
    <property type="term" value="P:chorismate biosynthetic process"/>
    <property type="evidence" value="ECO:0007669"/>
    <property type="project" value="UniProtKB-UniRule"/>
</dbReference>
<dbReference type="GO" id="GO:0019632">
    <property type="term" value="P:shikimate metabolic process"/>
    <property type="evidence" value="ECO:0007669"/>
    <property type="project" value="TreeGrafter"/>
</dbReference>
<dbReference type="CDD" id="cd01065">
    <property type="entry name" value="NAD_bind_Shikimate_DH"/>
    <property type="match status" value="1"/>
</dbReference>
<dbReference type="FunFam" id="3.40.50.10860:FF:000004">
    <property type="entry name" value="Quinate/shikimate dehydrogenase"/>
    <property type="match status" value="1"/>
</dbReference>
<dbReference type="FunFam" id="3.40.50.720:FF:000086">
    <property type="entry name" value="Quinate/shikimate dehydrogenase"/>
    <property type="match status" value="1"/>
</dbReference>
<dbReference type="Gene3D" id="3.40.50.10860">
    <property type="entry name" value="Leucine Dehydrogenase, chain A, domain 1"/>
    <property type="match status" value="1"/>
</dbReference>
<dbReference type="Gene3D" id="3.40.50.720">
    <property type="entry name" value="NAD(P)-binding Rossmann-like Domain"/>
    <property type="match status" value="1"/>
</dbReference>
<dbReference type="HAMAP" id="MF_00222">
    <property type="entry name" value="Shikimate_DH_AroE"/>
    <property type="match status" value="1"/>
</dbReference>
<dbReference type="HAMAP" id="MF_01578">
    <property type="entry name" value="Shikimate_DH_YdiB"/>
    <property type="match status" value="1"/>
</dbReference>
<dbReference type="InterPro" id="IPR046346">
    <property type="entry name" value="Aminoacid_DH-like_N_sf"/>
</dbReference>
<dbReference type="InterPro" id="IPR036291">
    <property type="entry name" value="NAD(P)-bd_dom_sf"/>
</dbReference>
<dbReference type="InterPro" id="IPR022872">
    <property type="entry name" value="Quinate/Shikimate_DH"/>
</dbReference>
<dbReference type="InterPro" id="IPR041121">
    <property type="entry name" value="SDH_C"/>
</dbReference>
<dbReference type="InterPro" id="IPR013708">
    <property type="entry name" value="Shikimate_DH-bd_N"/>
</dbReference>
<dbReference type="InterPro" id="IPR022893">
    <property type="entry name" value="Shikimate_DH_fam"/>
</dbReference>
<dbReference type="NCBIfam" id="NF009390">
    <property type="entry name" value="PRK12749.1"/>
    <property type="match status" value="1"/>
</dbReference>
<dbReference type="PANTHER" id="PTHR21089:SF1">
    <property type="entry name" value="BIFUNCTIONAL 3-DEHYDROQUINATE DEHYDRATASE_SHIKIMATE DEHYDROGENASE, CHLOROPLASTIC"/>
    <property type="match status" value="1"/>
</dbReference>
<dbReference type="PANTHER" id="PTHR21089">
    <property type="entry name" value="SHIKIMATE DEHYDROGENASE"/>
    <property type="match status" value="1"/>
</dbReference>
<dbReference type="Pfam" id="PF18317">
    <property type="entry name" value="SDH_C"/>
    <property type="match status" value="1"/>
</dbReference>
<dbReference type="Pfam" id="PF08501">
    <property type="entry name" value="Shikimate_dh_N"/>
    <property type="match status" value="1"/>
</dbReference>
<dbReference type="SUPFAM" id="SSF53223">
    <property type="entry name" value="Aminoacid dehydrogenase-like, N-terminal domain"/>
    <property type="match status" value="1"/>
</dbReference>
<dbReference type="SUPFAM" id="SSF51735">
    <property type="entry name" value="NAD(P)-binding Rossmann-fold domains"/>
    <property type="match status" value="1"/>
</dbReference>
<organism>
    <name type="scientific">Salmonella paratyphi B (strain ATCC BAA-1250 / SPB7)</name>
    <dbReference type="NCBI Taxonomy" id="1016998"/>
    <lineage>
        <taxon>Bacteria</taxon>
        <taxon>Pseudomonadati</taxon>
        <taxon>Pseudomonadota</taxon>
        <taxon>Gammaproteobacteria</taxon>
        <taxon>Enterobacterales</taxon>
        <taxon>Enterobacteriaceae</taxon>
        <taxon>Salmonella</taxon>
    </lineage>
</organism>
<gene>
    <name evidence="1" type="primary">ydiB</name>
    <name type="ordered locus">SPAB_01974</name>
</gene>
<proteinExistence type="inferred from homology"/>
<accession>A9N158</accession>
<sequence>MDVTAKYELIGLMAYPIRHSLSPEMQNKALEKAGLPYTYMAFEVDNTTFASAIEGLKALKMRGTGVSMPNKQLACEYVDELTPAAKLVGAINTIVNDDGYLRGYNTDGTGHIRAIKESGFDIRGKTMVLLGAGGAATAIGAQAAIEGIKEIKLFNRKDDFFEKAVAFAKRVNENTDCVVTVTDLADQHAFTEALASADILTNGTKVGMKPLENESLIGDVSLLRPELLVTECVYNPHMTKLLQQAQQAGCKTIDGYGMLLWQGAEQFELWTGKAFPLDYVKQVMGFTA</sequence>
<evidence type="ECO:0000255" key="1">
    <source>
        <dbReference type="HAMAP-Rule" id="MF_01578"/>
    </source>
</evidence>
<comment type="function">
    <text evidence="1">The actual biological function of YdiB remains unclear, nor is it known whether 3-dehydroshikimate or quinate represents the natural substrate. Catalyzes the reversible NAD-dependent reduction of both 3-dehydroshikimate (DHSA) and 3-dehydroquinate to yield shikimate (SA) and quinate, respectively. It can use both NAD or NADP for catalysis, however it has higher catalytic efficiency with NAD.</text>
</comment>
<comment type="catalytic activity">
    <reaction evidence="1">
        <text>L-quinate + NAD(+) = 3-dehydroquinate + NADH + H(+)</text>
        <dbReference type="Rhea" id="RHEA:22364"/>
        <dbReference type="ChEBI" id="CHEBI:15378"/>
        <dbReference type="ChEBI" id="CHEBI:29751"/>
        <dbReference type="ChEBI" id="CHEBI:32364"/>
        <dbReference type="ChEBI" id="CHEBI:57540"/>
        <dbReference type="ChEBI" id="CHEBI:57945"/>
        <dbReference type="EC" id="1.1.1.282"/>
    </reaction>
</comment>
<comment type="catalytic activity">
    <reaction evidence="1">
        <text>L-quinate + NADP(+) = 3-dehydroquinate + NADPH + H(+)</text>
        <dbReference type="Rhea" id="RHEA:18425"/>
        <dbReference type="ChEBI" id="CHEBI:15378"/>
        <dbReference type="ChEBI" id="CHEBI:29751"/>
        <dbReference type="ChEBI" id="CHEBI:32364"/>
        <dbReference type="ChEBI" id="CHEBI:57783"/>
        <dbReference type="ChEBI" id="CHEBI:58349"/>
        <dbReference type="EC" id="1.1.1.282"/>
    </reaction>
</comment>
<comment type="catalytic activity">
    <reaction evidence="1">
        <text>shikimate + NADP(+) = 3-dehydroshikimate + NADPH + H(+)</text>
        <dbReference type="Rhea" id="RHEA:17737"/>
        <dbReference type="ChEBI" id="CHEBI:15378"/>
        <dbReference type="ChEBI" id="CHEBI:16630"/>
        <dbReference type="ChEBI" id="CHEBI:36208"/>
        <dbReference type="ChEBI" id="CHEBI:57783"/>
        <dbReference type="ChEBI" id="CHEBI:58349"/>
        <dbReference type="EC" id="1.1.1.282"/>
    </reaction>
</comment>
<comment type="catalytic activity">
    <reaction evidence="1">
        <text>shikimate + NAD(+) = 3-dehydroshikimate + NADH + H(+)</text>
        <dbReference type="Rhea" id="RHEA:17741"/>
        <dbReference type="ChEBI" id="CHEBI:15378"/>
        <dbReference type="ChEBI" id="CHEBI:16630"/>
        <dbReference type="ChEBI" id="CHEBI:36208"/>
        <dbReference type="ChEBI" id="CHEBI:57540"/>
        <dbReference type="ChEBI" id="CHEBI:57945"/>
        <dbReference type="EC" id="1.1.1.282"/>
    </reaction>
</comment>
<comment type="pathway">
    <text evidence="1">Metabolic intermediate biosynthesis; chorismate biosynthesis; chorismate from D-erythrose 4-phosphate and phosphoenolpyruvate: step 4/7.</text>
</comment>
<comment type="subunit">
    <text evidence="1">Homodimer.</text>
</comment>
<comment type="similarity">
    <text evidence="1">Belongs to the shikimate dehydrogenase family.</text>
</comment>
<protein>
    <recommendedName>
        <fullName evidence="1">Quinate/shikimate dehydrogenase</fullName>
        <ecNumber evidence="1">1.1.1.282</ecNumber>
    </recommendedName>
    <alternativeName>
        <fullName evidence="1">NAD-dependent shikimate 5-dehydrogenase</fullName>
    </alternativeName>
</protein>
<name>YDIB_SALPB</name>
<reference key="1">
    <citation type="submission" date="2007-11" db="EMBL/GenBank/DDBJ databases">
        <authorList>
            <consortium name="The Salmonella enterica serovar Paratyphi B Genome Sequencing Project"/>
            <person name="McClelland M."/>
            <person name="Sanderson E.K."/>
            <person name="Porwollik S."/>
            <person name="Spieth J."/>
            <person name="Clifton W.S."/>
            <person name="Fulton R."/>
            <person name="Cordes M."/>
            <person name="Wollam A."/>
            <person name="Shah N."/>
            <person name="Pepin K."/>
            <person name="Bhonagiri V."/>
            <person name="Nash W."/>
            <person name="Johnson M."/>
            <person name="Thiruvilangam P."/>
            <person name="Wilson R."/>
        </authorList>
    </citation>
    <scope>NUCLEOTIDE SEQUENCE [LARGE SCALE GENOMIC DNA]</scope>
    <source>
        <strain>ATCC BAA-1250 / SPB7</strain>
    </source>
</reference>
<feature type="chain" id="PRO_1000087930" description="Quinate/shikimate dehydrogenase">
    <location>
        <begin position="1"/>
        <end position="288"/>
    </location>
</feature>
<feature type="binding site" evidence="1">
    <location>
        <position position="71"/>
    </location>
    <ligand>
        <name>substrate</name>
    </ligand>
</feature>
<feature type="binding site" evidence="1">
    <location>
        <position position="107"/>
    </location>
    <ligand>
        <name>substrate</name>
    </ligand>
</feature>
<feature type="binding site" evidence="1">
    <location>
        <begin position="132"/>
        <end position="135"/>
    </location>
    <ligand>
        <name>NAD(+)</name>
        <dbReference type="ChEBI" id="CHEBI:57540"/>
    </ligand>
</feature>
<feature type="binding site" evidence="1">
    <location>
        <begin position="155"/>
        <end position="158"/>
    </location>
    <ligand>
        <name>NAD(+)</name>
        <dbReference type="ChEBI" id="CHEBI:57540"/>
    </ligand>
</feature>
<feature type="binding site" evidence="1">
    <location>
        <position position="205"/>
    </location>
    <ligand>
        <name>NAD(+)</name>
        <dbReference type="ChEBI" id="CHEBI:57540"/>
    </ligand>
</feature>
<feature type="binding site" evidence="1">
    <location>
        <begin position="232"/>
        <end position="235"/>
    </location>
    <ligand>
        <name>NAD(+)</name>
        <dbReference type="ChEBI" id="CHEBI:57540"/>
    </ligand>
</feature>
<feature type="binding site" evidence="1">
    <location>
        <position position="255"/>
    </location>
    <ligand>
        <name>NAD(+)</name>
        <dbReference type="ChEBI" id="CHEBI:57540"/>
    </ligand>
</feature>